<protein>
    <recommendedName>
        <fullName evidence="1">Phosphoribosylformylglycinamidine cyclo-ligase</fullName>
        <ecNumber evidence="1">6.3.3.1</ecNumber>
    </recommendedName>
    <alternativeName>
        <fullName evidence="1">AIR synthase</fullName>
    </alternativeName>
    <alternativeName>
        <fullName evidence="1">AIRS</fullName>
    </alternativeName>
    <alternativeName>
        <fullName evidence="1">Phosphoribosyl-aminoimidazole synthetase</fullName>
    </alternativeName>
</protein>
<organism>
    <name type="scientific">Methylobacterium sp. (strain 4-46)</name>
    <dbReference type="NCBI Taxonomy" id="426117"/>
    <lineage>
        <taxon>Bacteria</taxon>
        <taxon>Pseudomonadati</taxon>
        <taxon>Pseudomonadota</taxon>
        <taxon>Alphaproteobacteria</taxon>
        <taxon>Hyphomicrobiales</taxon>
        <taxon>Methylobacteriaceae</taxon>
        <taxon>Methylobacterium</taxon>
    </lineage>
</organism>
<name>PUR5_METS4</name>
<gene>
    <name evidence="1" type="primary">purM</name>
    <name type="ordered locus">M446_5164</name>
</gene>
<reference key="1">
    <citation type="submission" date="2008-02" db="EMBL/GenBank/DDBJ databases">
        <title>Complete sequence of chromosome of Methylobacterium sp. 4-46.</title>
        <authorList>
            <consortium name="US DOE Joint Genome Institute"/>
            <person name="Copeland A."/>
            <person name="Lucas S."/>
            <person name="Lapidus A."/>
            <person name="Glavina del Rio T."/>
            <person name="Dalin E."/>
            <person name="Tice H."/>
            <person name="Bruce D."/>
            <person name="Goodwin L."/>
            <person name="Pitluck S."/>
            <person name="Chertkov O."/>
            <person name="Brettin T."/>
            <person name="Detter J.C."/>
            <person name="Han C."/>
            <person name="Kuske C.R."/>
            <person name="Schmutz J."/>
            <person name="Larimer F."/>
            <person name="Land M."/>
            <person name="Hauser L."/>
            <person name="Kyrpides N."/>
            <person name="Ivanova N."/>
            <person name="Marx C.J."/>
            <person name="Richardson P."/>
        </authorList>
    </citation>
    <scope>NUCLEOTIDE SEQUENCE [LARGE SCALE GENOMIC DNA]</scope>
    <source>
        <strain>4-46</strain>
    </source>
</reference>
<accession>B0UKC4</accession>
<keyword id="KW-0067">ATP-binding</keyword>
<keyword id="KW-0963">Cytoplasm</keyword>
<keyword id="KW-0436">Ligase</keyword>
<keyword id="KW-0547">Nucleotide-binding</keyword>
<keyword id="KW-0658">Purine biosynthesis</keyword>
<evidence type="ECO:0000255" key="1">
    <source>
        <dbReference type="HAMAP-Rule" id="MF_00741"/>
    </source>
</evidence>
<feature type="chain" id="PRO_1000193032" description="Phosphoribosylformylglycinamidine cyclo-ligase">
    <location>
        <begin position="1"/>
        <end position="355"/>
    </location>
</feature>
<proteinExistence type="inferred from homology"/>
<dbReference type="EC" id="6.3.3.1" evidence="1"/>
<dbReference type="EMBL" id="CP000943">
    <property type="protein sequence ID" value="ACA19489.1"/>
    <property type="molecule type" value="Genomic_DNA"/>
</dbReference>
<dbReference type="RefSeq" id="WP_012334875.1">
    <property type="nucleotide sequence ID" value="NC_010511.1"/>
</dbReference>
<dbReference type="SMR" id="B0UKC4"/>
<dbReference type="STRING" id="426117.M446_5164"/>
<dbReference type="KEGG" id="met:M446_5164"/>
<dbReference type="eggNOG" id="COG0150">
    <property type="taxonomic scope" value="Bacteria"/>
</dbReference>
<dbReference type="HOGENOM" id="CLU_047116_0_0_5"/>
<dbReference type="UniPathway" id="UPA00074">
    <property type="reaction ID" value="UER00129"/>
</dbReference>
<dbReference type="GO" id="GO:0005829">
    <property type="term" value="C:cytosol"/>
    <property type="evidence" value="ECO:0007669"/>
    <property type="project" value="TreeGrafter"/>
</dbReference>
<dbReference type="GO" id="GO:0005524">
    <property type="term" value="F:ATP binding"/>
    <property type="evidence" value="ECO:0007669"/>
    <property type="project" value="UniProtKB-KW"/>
</dbReference>
<dbReference type="GO" id="GO:0004637">
    <property type="term" value="F:phosphoribosylamine-glycine ligase activity"/>
    <property type="evidence" value="ECO:0007669"/>
    <property type="project" value="TreeGrafter"/>
</dbReference>
<dbReference type="GO" id="GO:0004641">
    <property type="term" value="F:phosphoribosylformylglycinamidine cyclo-ligase activity"/>
    <property type="evidence" value="ECO:0007669"/>
    <property type="project" value="UniProtKB-UniRule"/>
</dbReference>
<dbReference type="GO" id="GO:0006189">
    <property type="term" value="P:'de novo' IMP biosynthetic process"/>
    <property type="evidence" value="ECO:0007669"/>
    <property type="project" value="UniProtKB-UniRule"/>
</dbReference>
<dbReference type="GO" id="GO:0046084">
    <property type="term" value="P:adenine biosynthetic process"/>
    <property type="evidence" value="ECO:0007669"/>
    <property type="project" value="TreeGrafter"/>
</dbReference>
<dbReference type="CDD" id="cd02196">
    <property type="entry name" value="PurM"/>
    <property type="match status" value="1"/>
</dbReference>
<dbReference type="FunFam" id="3.30.1330.10:FF:000001">
    <property type="entry name" value="Phosphoribosylformylglycinamidine cyclo-ligase"/>
    <property type="match status" value="1"/>
</dbReference>
<dbReference type="FunFam" id="3.90.650.10:FF:000011">
    <property type="entry name" value="Phosphoribosylformylglycinamidine cyclo-ligase"/>
    <property type="match status" value="1"/>
</dbReference>
<dbReference type="Gene3D" id="3.90.650.10">
    <property type="entry name" value="PurM-like C-terminal domain"/>
    <property type="match status" value="1"/>
</dbReference>
<dbReference type="Gene3D" id="3.30.1330.10">
    <property type="entry name" value="PurM-like, N-terminal domain"/>
    <property type="match status" value="1"/>
</dbReference>
<dbReference type="HAMAP" id="MF_00741">
    <property type="entry name" value="AIRS"/>
    <property type="match status" value="1"/>
</dbReference>
<dbReference type="InterPro" id="IPR010918">
    <property type="entry name" value="PurM-like_C_dom"/>
</dbReference>
<dbReference type="InterPro" id="IPR036676">
    <property type="entry name" value="PurM-like_C_sf"/>
</dbReference>
<dbReference type="InterPro" id="IPR016188">
    <property type="entry name" value="PurM-like_N"/>
</dbReference>
<dbReference type="InterPro" id="IPR036921">
    <property type="entry name" value="PurM-like_N_sf"/>
</dbReference>
<dbReference type="InterPro" id="IPR004733">
    <property type="entry name" value="PurM_cligase"/>
</dbReference>
<dbReference type="NCBIfam" id="TIGR00878">
    <property type="entry name" value="purM"/>
    <property type="match status" value="1"/>
</dbReference>
<dbReference type="PANTHER" id="PTHR10520:SF12">
    <property type="entry name" value="TRIFUNCTIONAL PURINE BIOSYNTHETIC PROTEIN ADENOSINE-3"/>
    <property type="match status" value="1"/>
</dbReference>
<dbReference type="PANTHER" id="PTHR10520">
    <property type="entry name" value="TRIFUNCTIONAL PURINE BIOSYNTHETIC PROTEIN ADENOSINE-3-RELATED"/>
    <property type="match status" value="1"/>
</dbReference>
<dbReference type="Pfam" id="PF00586">
    <property type="entry name" value="AIRS"/>
    <property type="match status" value="1"/>
</dbReference>
<dbReference type="Pfam" id="PF02769">
    <property type="entry name" value="AIRS_C"/>
    <property type="match status" value="1"/>
</dbReference>
<dbReference type="SUPFAM" id="SSF56042">
    <property type="entry name" value="PurM C-terminal domain-like"/>
    <property type="match status" value="1"/>
</dbReference>
<dbReference type="SUPFAM" id="SSF55326">
    <property type="entry name" value="PurM N-terminal domain-like"/>
    <property type="match status" value="1"/>
</dbReference>
<comment type="catalytic activity">
    <reaction evidence="1">
        <text>2-formamido-N(1)-(5-O-phospho-beta-D-ribosyl)acetamidine + ATP = 5-amino-1-(5-phospho-beta-D-ribosyl)imidazole + ADP + phosphate + H(+)</text>
        <dbReference type="Rhea" id="RHEA:23032"/>
        <dbReference type="ChEBI" id="CHEBI:15378"/>
        <dbReference type="ChEBI" id="CHEBI:30616"/>
        <dbReference type="ChEBI" id="CHEBI:43474"/>
        <dbReference type="ChEBI" id="CHEBI:137981"/>
        <dbReference type="ChEBI" id="CHEBI:147287"/>
        <dbReference type="ChEBI" id="CHEBI:456216"/>
        <dbReference type="EC" id="6.3.3.1"/>
    </reaction>
</comment>
<comment type="pathway">
    <text evidence="1">Purine metabolism; IMP biosynthesis via de novo pathway; 5-amino-1-(5-phospho-D-ribosyl)imidazole from N(2)-formyl-N(1)-(5-phospho-D-ribosyl)glycinamide: step 2/2.</text>
</comment>
<comment type="subcellular location">
    <subcellularLocation>
        <location evidence="1">Cytoplasm</location>
    </subcellularLocation>
</comment>
<comment type="similarity">
    <text evidence="1">Belongs to the AIR synthase family.</text>
</comment>
<sequence>MAGENGLTYAAAGVDIDAGNAMVEAIKPLVRSTRRPGADAEIGGFGGLFDLKAAGFSDPILVAANDGVGTKVKIAIETGRHDTIGIDLVAMCVNDIVVQGAEPLFFLDYYATGKLVPGVGAAIVTGIAEGCRQAGCALIGGETAEMPGLYDGSDYDLAGFAVGAAERGALLPTDGVAPGDLVLGLPSSGVHSNGFSLVRRIVSASGLPWDAPAPFAPGRSLGEALLTPTRIYVRPLLAALRATGRGAIKALAHITGGGFPDNLPRVLPEAVGIALDLDAVAVPPVFGWLARTGGVAVPEMLRTFNCGIGMVVVVAPERIEAVEAALRAAGEAPVRLGTVTPRGEAPVSFAGRLGL</sequence>